<dbReference type="EMBL" id="AY325135">
    <property type="protein sequence ID" value="AAP92536.1"/>
    <property type="molecule type" value="mRNA"/>
</dbReference>
<dbReference type="EMBL" id="BC111708">
    <property type="protein sequence ID" value="AAI11709.1"/>
    <property type="molecule type" value="mRNA"/>
</dbReference>
<dbReference type="RefSeq" id="NP_001008776.1">
    <molecule id="Q7TPA5-2"/>
    <property type="nucleotide sequence ID" value="NM_001008776.3"/>
</dbReference>
<dbReference type="RefSeq" id="NP_001159824.1">
    <molecule id="Q7TPA5-1"/>
    <property type="nucleotide sequence ID" value="NM_001166352.2"/>
</dbReference>
<dbReference type="RefSeq" id="XP_006240543.1">
    <property type="nucleotide sequence ID" value="XM_006240481.2"/>
</dbReference>
<dbReference type="SMR" id="Q7TPA5"/>
<dbReference type="FunCoup" id="Q7TPA5">
    <property type="interactions" value="50"/>
</dbReference>
<dbReference type="STRING" id="10116.ENSRNOP00000041705"/>
<dbReference type="GlyCosmos" id="Q7TPA5">
    <property type="glycosylation" value="4 sites, No reported glycans"/>
</dbReference>
<dbReference type="GlyGen" id="Q7TPA5">
    <property type="glycosylation" value="4 sites"/>
</dbReference>
<dbReference type="iPTMnet" id="Q7TPA5"/>
<dbReference type="PaxDb" id="10116-ENSRNOP00000041705"/>
<dbReference type="Ensembl" id="ENSRNOT00000015516.5">
    <molecule id="Q7TPA5-1"/>
    <property type="protein sequence ID" value="ENSRNOP00000015516.3"/>
    <property type="gene ID" value="ENSRNOG00000011141.9"/>
</dbReference>
<dbReference type="Ensembl" id="ENSRNOT00000047324.7">
    <molecule id="Q7TPA5-2"/>
    <property type="protein sequence ID" value="ENSRNOP00000041705.3"/>
    <property type="gene ID" value="ENSRNOG00000011141.9"/>
</dbReference>
<dbReference type="GeneID" id="362774"/>
<dbReference type="KEGG" id="rno:362774"/>
<dbReference type="UCSC" id="RGD:1359239">
    <molecule id="Q7TPA5-1"/>
    <property type="organism name" value="rat"/>
</dbReference>
<dbReference type="AGR" id="RGD:1359239"/>
<dbReference type="CTD" id="256394"/>
<dbReference type="RGD" id="1359239">
    <property type="gene designation" value="Serpina11"/>
</dbReference>
<dbReference type="eggNOG" id="KOG2392">
    <property type="taxonomic scope" value="Eukaryota"/>
</dbReference>
<dbReference type="GeneTree" id="ENSGT00940000162010"/>
<dbReference type="HOGENOM" id="CLU_023330_2_1_1"/>
<dbReference type="InParanoid" id="Q7TPA5"/>
<dbReference type="OMA" id="MACTVLQ"/>
<dbReference type="OrthoDB" id="41634at9989"/>
<dbReference type="PhylomeDB" id="Q7TPA5"/>
<dbReference type="TreeFam" id="TF343201"/>
<dbReference type="PRO" id="PR:Q7TPA5"/>
<dbReference type="Proteomes" id="UP000002494">
    <property type="component" value="Chromosome 6"/>
</dbReference>
<dbReference type="Bgee" id="ENSRNOG00000011141">
    <property type="expression patterns" value="Expressed in liver and 8 other cell types or tissues"/>
</dbReference>
<dbReference type="GO" id="GO:0005615">
    <property type="term" value="C:extracellular space"/>
    <property type="evidence" value="ECO:0000318"/>
    <property type="project" value="GO_Central"/>
</dbReference>
<dbReference type="GO" id="GO:0004867">
    <property type="term" value="F:serine-type endopeptidase inhibitor activity"/>
    <property type="evidence" value="ECO:0000318"/>
    <property type="project" value="GO_Central"/>
</dbReference>
<dbReference type="CDD" id="cd19557">
    <property type="entry name" value="serpinA11"/>
    <property type="match status" value="1"/>
</dbReference>
<dbReference type="FunFam" id="2.30.39.10:FF:000003">
    <property type="entry name" value="alpha-1-antitrypsin isoform X1"/>
    <property type="match status" value="1"/>
</dbReference>
<dbReference type="FunFam" id="3.30.497.10:FF:000001">
    <property type="entry name" value="Serine protease inhibitor"/>
    <property type="match status" value="1"/>
</dbReference>
<dbReference type="FunFam" id="2.10.310.10:FF:000001">
    <property type="entry name" value="Serpin family A member 1"/>
    <property type="match status" value="1"/>
</dbReference>
<dbReference type="Gene3D" id="2.30.39.10">
    <property type="entry name" value="Alpha-1-antitrypsin, domain 1"/>
    <property type="match status" value="1"/>
</dbReference>
<dbReference type="Gene3D" id="3.30.497.10">
    <property type="entry name" value="Antithrombin, subunit I, domain 2"/>
    <property type="match status" value="1"/>
</dbReference>
<dbReference type="Gene3D" id="2.10.310.10">
    <property type="entry name" value="Serpins superfamily"/>
    <property type="match status" value="1"/>
</dbReference>
<dbReference type="InterPro" id="IPR023796">
    <property type="entry name" value="Serpin_dom"/>
</dbReference>
<dbReference type="InterPro" id="IPR000215">
    <property type="entry name" value="Serpin_fam"/>
</dbReference>
<dbReference type="InterPro" id="IPR036186">
    <property type="entry name" value="Serpin_sf"/>
</dbReference>
<dbReference type="InterPro" id="IPR042178">
    <property type="entry name" value="Serpin_sf_1"/>
</dbReference>
<dbReference type="InterPro" id="IPR042185">
    <property type="entry name" value="Serpin_sf_2"/>
</dbReference>
<dbReference type="PANTHER" id="PTHR11461">
    <property type="entry name" value="SERINE PROTEASE INHIBITOR, SERPIN"/>
    <property type="match status" value="1"/>
</dbReference>
<dbReference type="PANTHER" id="PTHR11461:SF154">
    <property type="entry name" value="SERPIN A11"/>
    <property type="match status" value="1"/>
</dbReference>
<dbReference type="Pfam" id="PF00079">
    <property type="entry name" value="Serpin"/>
    <property type="match status" value="1"/>
</dbReference>
<dbReference type="SMART" id="SM00093">
    <property type="entry name" value="SERPIN"/>
    <property type="match status" value="1"/>
</dbReference>
<dbReference type="SUPFAM" id="SSF56574">
    <property type="entry name" value="Serpins"/>
    <property type="match status" value="1"/>
</dbReference>
<accession>Q7TPA5</accession>
<accession>Q2M2R9</accession>
<keyword id="KW-0025">Alternative splicing</keyword>
<keyword id="KW-0325">Glycoprotein</keyword>
<keyword id="KW-0646">Protease inhibitor</keyword>
<keyword id="KW-1185">Reference proteome</keyword>
<keyword id="KW-0964">Secreted</keyword>
<keyword id="KW-0722">Serine protease inhibitor</keyword>
<keyword id="KW-0732">Signal</keyword>
<name>SPA11_RAT</name>
<comment type="subcellular location">
    <subcellularLocation>
        <location evidence="4">Secreted</location>
    </subcellularLocation>
</comment>
<comment type="alternative products">
    <event type="alternative splicing"/>
    <isoform>
        <id>Q7TPA5-1</id>
        <name>1</name>
        <sequence type="displayed"/>
    </isoform>
    <isoform>
        <id>Q7TPA5-2</id>
        <name>2</name>
        <sequence type="described" ref="VSP_021274"/>
    </isoform>
</comment>
<comment type="similarity">
    <text evidence="4">Belongs to the serpin family.</text>
</comment>
<feature type="signal peptide" evidence="1">
    <location>
        <begin position="1"/>
        <end position="24"/>
    </location>
</feature>
<feature type="chain" id="PRO_0000041975" description="Serpin A11">
    <location>
        <begin position="25"/>
        <end position="422"/>
    </location>
</feature>
<feature type="region of interest" description="Disordered" evidence="2">
    <location>
        <begin position="25"/>
        <end position="45"/>
    </location>
</feature>
<feature type="glycosylation site" description="N-linked (GlcNAc...) asparagine" evidence="1">
    <location>
        <position position="106"/>
    </location>
</feature>
<feature type="glycosylation site" description="N-linked (GlcNAc...) asparagine" evidence="1">
    <location>
        <position position="169"/>
    </location>
</feature>
<feature type="glycosylation site" description="N-linked (GlcNAc...) asparagine" evidence="1">
    <location>
        <position position="350"/>
    </location>
</feature>
<feature type="glycosylation site" description="N-linked (GlcNAc...) asparagine" evidence="1">
    <location>
        <position position="385"/>
    </location>
</feature>
<feature type="splice variant" id="VSP_021274" description="In isoform 2." evidence="3">
    <original>P</original>
    <variation>PRKAQAGGAGNGGLHWDRVNEFPQNRVGKLSLKHLQMTQTW</variation>
    <location>
        <position position="305"/>
    </location>
</feature>
<organism>
    <name type="scientific">Rattus norvegicus</name>
    <name type="common">Rat</name>
    <dbReference type="NCBI Taxonomy" id="10116"/>
    <lineage>
        <taxon>Eukaryota</taxon>
        <taxon>Metazoa</taxon>
        <taxon>Chordata</taxon>
        <taxon>Craniata</taxon>
        <taxon>Vertebrata</taxon>
        <taxon>Euteleostomi</taxon>
        <taxon>Mammalia</taxon>
        <taxon>Eutheria</taxon>
        <taxon>Euarchontoglires</taxon>
        <taxon>Glires</taxon>
        <taxon>Rodentia</taxon>
        <taxon>Myomorpha</taxon>
        <taxon>Muroidea</taxon>
        <taxon>Muridae</taxon>
        <taxon>Murinae</taxon>
        <taxon>Rattus</taxon>
    </lineage>
</organism>
<evidence type="ECO:0000255" key="1"/>
<evidence type="ECO:0000256" key="2">
    <source>
        <dbReference type="SAM" id="MobiDB-lite"/>
    </source>
</evidence>
<evidence type="ECO:0000303" key="3">
    <source ref="1"/>
</evidence>
<evidence type="ECO:0000305" key="4"/>
<sequence length="422" mass="47024">MGPVWLWLLIAELLLPVHYQPSSAHGDKSLGAPQPASHQSLEPAPAYHKVTPTITNFALRLYKQLAEEIPGNILFSPVSLSSTVALLSLGAHADTQAQILQSLGFNLTETPAADIHRGFQSLLHTLDLPSPKLELKLGHSLFLDRQLKPQQRFLDSAKELYGALAFSANFTEAAATGQQINDLVRKQTYGQVVGCLPEFDRDTLMVLLNYIFFKAKWKHPFDRYQTRKQESFFVDQRLQLRIPMMRQKEMHRFLYDQEASCTVLQIEYSGTALLLLVLPDPGKMQQVEAALQPETLRRWGQRFLPSLLDLHLPRFSVSATYNLEEILPLVGLSSLFDVEADLSGIMGQLNKTVSRVSHKAVVDMNEKGTEAAAASGLLSQPPSLNMTSAPHAHFNRPFLLLLWEVTTQSLLFLGKVVNPAAG</sequence>
<gene>
    <name type="primary">Serpina11</name>
    <name type="ORF">Ab1-046</name>
</gene>
<reference key="1">
    <citation type="submission" date="2003-06" db="EMBL/GenBank/DDBJ databases">
        <title>Liver regeneration after PH.</title>
        <authorList>
            <person name="Xu C.S."/>
            <person name="Li W.Q."/>
            <person name="Li Y.C."/>
            <person name="Yang K.J."/>
            <person name="Yan H.M."/>
            <person name="Chang C.F."/>
            <person name="Zhao L.F."/>
            <person name="Ma H."/>
            <person name="Wang L."/>
            <person name="Wang S.F."/>
            <person name="Han H.P."/>
            <person name="Wang G.P."/>
            <person name="Chai L.Q."/>
            <person name="Yuan J.Y."/>
            <person name="Shi J.B."/>
            <person name="Rahman S."/>
            <person name="Wang Q.N."/>
            <person name="Zhang J.B."/>
        </authorList>
    </citation>
    <scope>NUCLEOTIDE SEQUENCE [LARGE SCALE MRNA] (ISOFORM 2)</scope>
    <source>
        <tissue>Liver</tissue>
    </source>
</reference>
<reference key="2">
    <citation type="journal article" date="2004" name="Genome Res.">
        <title>The status, quality, and expansion of the NIH full-length cDNA project: the Mammalian Gene Collection (MGC).</title>
        <authorList>
            <consortium name="The MGC Project Team"/>
        </authorList>
    </citation>
    <scope>NUCLEOTIDE SEQUENCE [LARGE SCALE MRNA] (ISOFORM 1)</scope>
    <source>
        <tissue>Liver</tissue>
    </source>
</reference>
<protein>
    <recommendedName>
        <fullName>Serpin A11</fullName>
    </recommendedName>
    <alternativeName>
        <fullName>Liver regeneration-related protein LRRG023</fullName>
    </alternativeName>
</protein>
<proteinExistence type="evidence at transcript level"/>